<protein>
    <recommendedName>
        <fullName evidence="10">Endoplasmic reticulum membrane protein 65</fullName>
    </recommendedName>
    <alternativeName>
        <fullName evidence="7">65 kDa endoplasmic reticulum membrane protein</fullName>
    </alternativeName>
</protein>
<name>TAPT1_YEAST</name>
<proteinExistence type="evidence at protein level"/>
<gene>
    <name evidence="7" type="primary">EMP65</name>
    <name evidence="11" type="ordered locus">YER140W</name>
</gene>
<evidence type="ECO:0000255" key="1"/>
<evidence type="ECO:0000255" key="2">
    <source>
        <dbReference type="PROSITE-ProRule" id="PRU00498"/>
    </source>
</evidence>
<evidence type="ECO:0000269" key="3">
    <source>
    </source>
</evidence>
<evidence type="ECO:0000269" key="4">
    <source>
    </source>
</evidence>
<evidence type="ECO:0000269" key="5">
    <source>
    </source>
</evidence>
<evidence type="ECO:0000269" key="6">
    <source>
    </source>
</evidence>
<evidence type="ECO:0000303" key="7">
    <source>
    </source>
</evidence>
<evidence type="ECO:0000305" key="8"/>
<evidence type="ECO:0000305" key="9">
    <source>
    </source>
</evidence>
<evidence type="ECO:0000305" key="10">
    <source>
    </source>
</evidence>
<evidence type="ECO:0000312" key="11">
    <source>
        <dbReference type="SGD" id="S000000942"/>
    </source>
</evidence>
<evidence type="ECO:0007744" key="12">
    <source>
    </source>
</evidence>
<evidence type="ECO:0007744" key="13">
    <source>
    </source>
</evidence>
<keyword id="KW-0256">Endoplasmic reticulum</keyword>
<keyword id="KW-0325">Glycoprotein</keyword>
<keyword id="KW-0472">Membrane</keyword>
<keyword id="KW-0496">Mitochondrion</keyword>
<keyword id="KW-0597">Phosphoprotein</keyword>
<keyword id="KW-1185">Reference proteome</keyword>
<keyword id="KW-0812">Transmembrane</keyword>
<keyword id="KW-1133">Transmembrane helix</keyword>
<dbReference type="EMBL" id="U18917">
    <property type="protein sequence ID" value="AAB64667.1"/>
    <property type="molecule type" value="Genomic_DNA"/>
</dbReference>
<dbReference type="EMBL" id="BK006939">
    <property type="protein sequence ID" value="DAA07801.1"/>
    <property type="molecule type" value="Genomic_DNA"/>
</dbReference>
<dbReference type="PIR" id="S50643">
    <property type="entry name" value="S50643"/>
</dbReference>
<dbReference type="RefSeq" id="NP_011067.3">
    <property type="nucleotide sequence ID" value="NM_001179030.3"/>
</dbReference>
<dbReference type="BioGRID" id="36889">
    <property type="interactions" value="113"/>
</dbReference>
<dbReference type="DIP" id="DIP-5409N"/>
<dbReference type="FunCoup" id="P40085">
    <property type="interactions" value="329"/>
</dbReference>
<dbReference type="IntAct" id="P40085">
    <property type="interactions" value="2"/>
</dbReference>
<dbReference type="MINT" id="P40085"/>
<dbReference type="STRING" id="4932.YER140W"/>
<dbReference type="GlyCosmos" id="P40085">
    <property type="glycosylation" value="1 site, No reported glycans"/>
</dbReference>
<dbReference type="GlyGen" id="P40085">
    <property type="glycosylation" value="1 site"/>
</dbReference>
<dbReference type="iPTMnet" id="P40085"/>
<dbReference type="PaxDb" id="4932-YER140W"/>
<dbReference type="PeptideAtlas" id="P40085"/>
<dbReference type="EnsemblFungi" id="YER140W_mRNA">
    <property type="protein sequence ID" value="YER140W"/>
    <property type="gene ID" value="YER140W"/>
</dbReference>
<dbReference type="GeneID" id="856883"/>
<dbReference type="KEGG" id="sce:YER140W"/>
<dbReference type="AGR" id="SGD:S000000942"/>
<dbReference type="SGD" id="S000000942">
    <property type="gene designation" value="EMP65"/>
</dbReference>
<dbReference type="VEuPathDB" id="FungiDB:YER140W"/>
<dbReference type="eggNOG" id="KOG2490">
    <property type="taxonomic scope" value="Eukaryota"/>
</dbReference>
<dbReference type="GeneTree" id="ENSGT00390000010628"/>
<dbReference type="HOGENOM" id="CLU_003655_1_1_1"/>
<dbReference type="InParanoid" id="P40085"/>
<dbReference type="OMA" id="YHDVRGQ"/>
<dbReference type="OrthoDB" id="5376140at2759"/>
<dbReference type="BioCyc" id="YEAST:G3O-30301-MONOMER"/>
<dbReference type="BioGRID-ORCS" id="856883">
    <property type="hits" value="0 hits in 10 CRISPR screens"/>
</dbReference>
<dbReference type="PRO" id="PR:P40085"/>
<dbReference type="Proteomes" id="UP000002311">
    <property type="component" value="Chromosome V"/>
</dbReference>
<dbReference type="RNAct" id="P40085">
    <property type="molecule type" value="protein"/>
</dbReference>
<dbReference type="GO" id="GO:0071944">
    <property type="term" value="C:cell periphery"/>
    <property type="evidence" value="ECO:0007005"/>
    <property type="project" value="SGD"/>
</dbReference>
<dbReference type="GO" id="GO:0005783">
    <property type="term" value="C:endoplasmic reticulum"/>
    <property type="evidence" value="ECO:0007005"/>
    <property type="project" value="SGD"/>
</dbReference>
<dbReference type="GO" id="GO:0005789">
    <property type="term" value="C:endoplasmic reticulum membrane"/>
    <property type="evidence" value="ECO:0000314"/>
    <property type="project" value="SGD"/>
</dbReference>
<dbReference type="GO" id="GO:0005739">
    <property type="term" value="C:mitochondrion"/>
    <property type="evidence" value="ECO:0007005"/>
    <property type="project" value="SGD"/>
</dbReference>
<dbReference type="GO" id="GO:0034975">
    <property type="term" value="P:protein folding in endoplasmic reticulum"/>
    <property type="evidence" value="ECO:0007003"/>
    <property type="project" value="SGD"/>
</dbReference>
<dbReference type="InterPro" id="IPR008010">
    <property type="entry name" value="Tatp1"/>
</dbReference>
<dbReference type="PANTHER" id="PTHR13317">
    <property type="entry name" value="TRANSMEMBRANE ANTERIOR POSTERIOR TRANSFORMATION PROTEIN 1 HOMOLOG"/>
    <property type="match status" value="1"/>
</dbReference>
<dbReference type="PANTHER" id="PTHR13317:SF4">
    <property type="entry name" value="TRANSMEMBRANE ANTERIOR POSTERIOR TRANSFORMATION PROTEIN 1 HOMOLOG"/>
    <property type="match status" value="1"/>
</dbReference>
<dbReference type="Pfam" id="PF05346">
    <property type="entry name" value="DUF747"/>
    <property type="match status" value="1"/>
</dbReference>
<sequence>MQHKDTAVAKDTAKKRLLRRNSAPSAIHIISRLDKKWSFLWNTIDRHNIVEEQDESSAAKSEEEHEDDYELEQLLNMIRIPMFLEKFMLFALLTSLDCFLYYFTVLPIRLIKGYVKQFKSYRQHYRLQQRSGHKNKIPFRYRITSREYKERCMIFIIVISSILLSKLDTSKLYHRIKRQSTMKLYMLFSVLEMADKMLASLGQSLLTVMLSRKNSERILLHKCLLVSMSLTYVTIHGYVLVYQAISLNIAVNSYSNALLTLLLSMQFAEIKSSVLKKFDKEGFFQITIADVVERFKLTLLLSITGLRNLQSWSSSLSNTSINFWSPRSTLSIVINILCGPMVSVVGSEVLVDWAKHAYITKFNRIRPQIYDKFYYIIYKDYSTRTHKLEDRLGLPLPAFVVLFIVMVRPTLFKSSEPSYLPSLFRILFMGASVFLLALLAKFTLDLILIKWSKRIEQRFRDQAFNTVVTEEEYVPGLLSGGMGKVDVSTRIALHSDYNKENRIETESVSPMRKRKTTLTAECTPPSLNDIRRQKDSKNPRSLENVARYKMVSKRIW</sequence>
<comment type="function">
    <text evidence="5">May be involved in membrane protein folding.</text>
</comment>
<comment type="subunit">
    <text evidence="6">Interacts with SLP1.</text>
</comment>
<comment type="interaction">
    <interactant intactId="EBI-22717">
        <id>P40085</id>
    </interactant>
    <interactant intactId="EBI-35990">
        <id>Q12232</id>
        <label>SLP1</label>
    </interactant>
    <organismsDiffer>false</organismsDiffer>
    <experiments>4</experiments>
</comment>
<comment type="subcellular location">
    <subcellularLocation>
        <location evidence="6">Endoplasmic reticulum membrane</location>
        <topology evidence="1">Multi-pass membrane protein</topology>
    </subcellularLocation>
    <subcellularLocation>
        <location evidence="3">Mitochondrion</location>
    </subcellularLocation>
</comment>
<comment type="similarity">
    <text evidence="8">Belongs to the TAPT1 family.</text>
</comment>
<accession>P40085</accession>
<accession>D3DM47</accession>
<feature type="chain" id="PRO_0000202654" description="Endoplasmic reticulum membrane protein 65">
    <location>
        <begin position="1"/>
        <end position="556"/>
    </location>
</feature>
<feature type="topological domain" description="Cytoplasmic" evidence="9">
    <location>
        <begin position="1"/>
        <end position="87"/>
    </location>
</feature>
<feature type="transmembrane region" description="Helical" evidence="1">
    <location>
        <begin position="88"/>
        <end position="108"/>
    </location>
</feature>
<feature type="topological domain" description="Lumenal" evidence="9">
    <location>
        <begin position="109"/>
        <end position="151"/>
    </location>
</feature>
<feature type="transmembrane region" description="Helical" evidence="1">
    <location>
        <begin position="152"/>
        <end position="172"/>
    </location>
</feature>
<feature type="topological domain" description="Cytoplasmic" evidence="9">
    <location>
        <begin position="173"/>
        <end position="224"/>
    </location>
</feature>
<feature type="transmembrane region" description="Helical" evidence="1">
    <location>
        <begin position="225"/>
        <end position="245"/>
    </location>
</feature>
<feature type="topological domain" description="Lumenal" evidence="9">
    <location>
        <begin position="246"/>
        <end position="330"/>
    </location>
</feature>
<feature type="transmembrane region" description="Helical" evidence="1">
    <location>
        <begin position="331"/>
        <end position="351"/>
    </location>
</feature>
<feature type="topological domain" description="Cytoplasmic" evidence="9">
    <location>
        <begin position="352"/>
        <end position="391"/>
    </location>
</feature>
<feature type="transmembrane region" description="Helical" evidence="1">
    <location>
        <begin position="392"/>
        <end position="412"/>
    </location>
</feature>
<feature type="topological domain" description="Lumenal" evidence="9">
    <location>
        <begin position="413"/>
        <end position="428"/>
    </location>
</feature>
<feature type="transmembrane region" description="Helical" evidence="1">
    <location>
        <begin position="429"/>
        <end position="449"/>
    </location>
</feature>
<feature type="topological domain" description="Cytoplasmic" evidence="4">
    <location>
        <begin position="450"/>
        <end position="556"/>
    </location>
</feature>
<feature type="modified residue" description="Phosphoserine" evidence="12 13">
    <location>
        <position position="22"/>
    </location>
</feature>
<feature type="glycosylation site" description="N-linked (GlcNAc...) asparagine" evidence="2">
    <location>
        <position position="318"/>
    </location>
</feature>
<reference key="1">
    <citation type="journal article" date="1997" name="Nature">
        <title>The nucleotide sequence of Saccharomyces cerevisiae chromosome V.</title>
        <authorList>
            <person name="Dietrich F.S."/>
            <person name="Mulligan J.T."/>
            <person name="Hennessy K.M."/>
            <person name="Yelton M.A."/>
            <person name="Allen E."/>
            <person name="Araujo R."/>
            <person name="Aviles E."/>
            <person name="Berno A."/>
            <person name="Brennan T."/>
            <person name="Carpenter J."/>
            <person name="Chen E."/>
            <person name="Cherry J.M."/>
            <person name="Chung E."/>
            <person name="Duncan M."/>
            <person name="Guzman E."/>
            <person name="Hartzell G."/>
            <person name="Hunicke-Smith S."/>
            <person name="Hyman R.W."/>
            <person name="Kayser A."/>
            <person name="Komp C."/>
            <person name="Lashkari D."/>
            <person name="Lew H."/>
            <person name="Lin D."/>
            <person name="Mosedale D."/>
            <person name="Nakahara K."/>
            <person name="Namath A."/>
            <person name="Norgren R."/>
            <person name="Oefner P."/>
            <person name="Oh C."/>
            <person name="Petel F.X."/>
            <person name="Roberts D."/>
            <person name="Sehl P."/>
            <person name="Schramm S."/>
            <person name="Shogren T."/>
            <person name="Smith V."/>
            <person name="Taylor P."/>
            <person name="Wei Y."/>
            <person name="Botstein D."/>
            <person name="Davis R.W."/>
        </authorList>
    </citation>
    <scope>NUCLEOTIDE SEQUENCE [LARGE SCALE GENOMIC DNA]</scope>
    <source>
        <strain>ATCC 204508 / S288c</strain>
    </source>
</reference>
<reference key="2">
    <citation type="journal article" date="2014" name="G3 (Bethesda)">
        <title>The reference genome sequence of Saccharomyces cerevisiae: Then and now.</title>
        <authorList>
            <person name="Engel S.R."/>
            <person name="Dietrich F.S."/>
            <person name="Fisk D.G."/>
            <person name="Binkley G."/>
            <person name="Balakrishnan R."/>
            <person name="Costanzo M.C."/>
            <person name="Dwight S.S."/>
            <person name="Hitz B.C."/>
            <person name="Karra K."/>
            <person name="Nash R.S."/>
            <person name="Weng S."/>
            <person name="Wong E.D."/>
            <person name="Lloyd P."/>
            <person name="Skrzypek M.S."/>
            <person name="Miyasato S.R."/>
            <person name="Simison M."/>
            <person name="Cherry J.M."/>
        </authorList>
    </citation>
    <scope>GENOME REANNOTATION</scope>
    <source>
        <strain>ATCC 204508 / S288c</strain>
    </source>
</reference>
<reference key="3">
    <citation type="journal article" date="2003" name="Proc. Natl. Acad. Sci. U.S.A.">
        <title>The proteome of Saccharomyces cerevisiae mitochondria.</title>
        <authorList>
            <person name="Sickmann A."/>
            <person name="Reinders J."/>
            <person name="Wagner Y."/>
            <person name="Joppich C."/>
            <person name="Zahedi R.P."/>
            <person name="Meyer H.E."/>
            <person name="Schoenfisch B."/>
            <person name="Perschil I."/>
            <person name="Chacinska A."/>
            <person name="Guiard B."/>
            <person name="Rehling P."/>
            <person name="Pfanner N."/>
            <person name="Meisinger C."/>
        </authorList>
    </citation>
    <scope>SUBCELLULAR LOCATION [LARGE SCALE ANALYSIS]</scope>
    <source>
        <strain>ATCC 76625 / YPH499</strain>
    </source>
</reference>
<reference key="4">
    <citation type="journal article" date="2006" name="Proc. Natl. Acad. Sci. U.S.A.">
        <title>A global topology map of the Saccharomyces cerevisiae membrane proteome.</title>
        <authorList>
            <person name="Kim H."/>
            <person name="Melen K."/>
            <person name="Oesterberg M."/>
            <person name="von Heijne G."/>
        </authorList>
    </citation>
    <scope>TOPOLOGY [LARGE SCALE ANALYSIS]</scope>
    <source>
        <strain>ATCC 208353 / W303-1A</strain>
    </source>
</reference>
<reference key="5">
    <citation type="journal article" date="2007" name="J. Proteome Res.">
        <title>Large-scale phosphorylation analysis of alpha-factor-arrested Saccharomyces cerevisiae.</title>
        <authorList>
            <person name="Li X."/>
            <person name="Gerber S.A."/>
            <person name="Rudner A.D."/>
            <person name="Beausoleil S.A."/>
            <person name="Haas W."/>
            <person name="Villen J."/>
            <person name="Elias J.E."/>
            <person name="Gygi S.P."/>
        </authorList>
    </citation>
    <scope>PHOSPHORYLATION [LARGE SCALE ANALYSIS] AT SER-22</scope>
    <scope>IDENTIFICATION BY MASS SPECTROMETRY [LARGE SCALE ANALYSIS]</scope>
    <source>
        <strain>ADR376</strain>
    </source>
</reference>
<reference key="6">
    <citation type="journal article" date="2008" name="Mol. Cell. Proteomics">
        <title>A multidimensional chromatography technology for in-depth phosphoproteome analysis.</title>
        <authorList>
            <person name="Albuquerque C.P."/>
            <person name="Smolka M.B."/>
            <person name="Payne S.H."/>
            <person name="Bafna V."/>
            <person name="Eng J."/>
            <person name="Zhou H."/>
        </authorList>
    </citation>
    <scope>IDENTIFICATION BY MASS SPECTROMETRY [LARGE SCALE ANALYSIS]</scope>
</reference>
<reference key="7">
    <citation type="journal article" date="2009" name="Science">
        <title>Comprehensive characterization of genes required for protein folding in the endoplasmic reticulum.</title>
        <authorList>
            <person name="Jonikas M.C."/>
            <person name="Collins S.R."/>
            <person name="Denic V."/>
            <person name="Oh E."/>
            <person name="Quan E.M."/>
            <person name="Schmid V."/>
            <person name="Weibezahn J."/>
            <person name="Schwappach B."/>
            <person name="Walter P."/>
            <person name="Weissman J.S."/>
            <person name="Schuldiner M."/>
        </authorList>
    </citation>
    <scope>FUNCTION</scope>
</reference>
<reference key="8">
    <citation type="journal article" date="2009" name="Science">
        <title>Global analysis of Cdk1 substrate phosphorylation sites provides insights into evolution.</title>
        <authorList>
            <person name="Holt L.J."/>
            <person name="Tuch B.B."/>
            <person name="Villen J."/>
            <person name="Johnson A.D."/>
            <person name="Gygi S.P."/>
            <person name="Morgan D.O."/>
        </authorList>
    </citation>
    <scope>PHOSPHORYLATION [LARGE SCALE ANALYSIS] AT SER-22</scope>
    <scope>IDENTIFICATION BY MASS SPECTROMETRY [LARGE SCALE ANALYSIS]</scope>
</reference>
<reference key="9">
    <citation type="journal article" date="2012" name="G3 (Bethesda)">
        <title>Genetic analysis of Mps3 SUN domain mutants in Saccharomyces cerevisiae reveals an interaction with the SUN-like protein Slp1.</title>
        <authorList>
            <person name="Friederichs J.M."/>
            <person name="Gardner J.M."/>
            <person name="Smoyer C.J."/>
            <person name="Whetstine C.R."/>
            <person name="Gogol M."/>
            <person name="Slaughter B.D."/>
            <person name="Jaspersen S.L."/>
        </authorList>
    </citation>
    <scope>SUBCELLULAR LOCATION</scope>
    <scope>INTERACTION WITH SLP1</scope>
</reference>
<organism>
    <name type="scientific">Saccharomyces cerevisiae (strain ATCC 204508 / S288c)</name>
    <name type="common">Baker's yeast</name>
    <dbReference type="NCBI Taxonomy" id="559292"/>
    <lineage>
        <taxon>Eukaryota</taxon>
        <taxon>Fungi</taxon>
        <taxon>Dikarya</taxon>
        <taxon>Ascomycota</taxon>
        <taxon>Saccharomycotina</taxon>
        <taxon>Saccharomycetes</taxon>
        <taxon>Saccharomycetales</taxon>
        <taxon>Saccharomycetaceae</taxon>
        <taxon>Saccharomyces</taxon>
    </lineage>
</organism>